<name>RL32_DESDA</name>
<gene>
    <name evidence="1" type="primary">rpmF</name>
    <name type="ordered locus">Ddes_1611</name>
</gene>
<organism>
    <name type="scientific">Desulfovibrio desulfuricans (strain ATCC 27774 / DSM 6949 / MB)</name>
    <dbReference type="NCBI Taxonomy" id="525146"/>
    <lineage>
        <taxon>Bacteria</taxon>
        <taxon>Pseudomonadati</taxon>
        <taxon>Thermodesulfobacteriota</taxon>
        <taxon>Desulfovibrionia</taxon>
        <taxon>Desulfovibrionales</taxon>
        <taxon>Desulfovibrionaceae</taxon>
        <taxon>Desulfovibrio</taxon>
    </lineage>
</organism>
<accession>B8J183</accession>
<comment type="similarity">
    <text evidence="1">Belongs to the bacterial ribosomal protein bL32 family.</text>
</comment>
<dbReference type="EMBL" id="CP001358">
    <property type="protein sequence ID" value="ACL49510.1"/>
    <property type="molecule type" value="Genomic_DNA"/>
</dbReference>
<dbReference type="SMR" id="B8J183"/>
<dbReference type="STRING" id="525146.Ddes_1611"/>
<dbReference type="KEGG" id="dds:Ddes_1611"/>
<dbReference type="eggNOG" id="COG0333">
    <property type="taxonomic scope" value="Bacteria"/>
</dbReference>
<dbReference type="HOGENOM" id="CLU_129084_1_3_7"/>
<dbReference type="GO" id="GO:0015934">
    <property type="term" value="C:large ribosomal subunit"/>
    <property type="evidence" value="ECO:0007669"/>
    <property type="project" value="InterPro"/>
</dbReference>
<dbReference type="GO" id="GO:0003735">
    <property type="term" value="F:structural constituent of ribosome"/>
    <property type="evidence" value="ECO:0007669"/>
    <property type="project" value="InterPro"/>
</dbReference>
<dbReference type="GO" id="GO:0006412">
    <property type="term" value="P:translation"/>
    <property type="evidence" value="ECO:0007669"/>
    <property type="project" value="UniProtKB-UniRule"/>
</dbReference>
<dbReference type="HAMAP" id="MF_00340">
    <property type="entry name" value="Ribosomal_bL32"/>
    <property type="match status" value="1"/>
</dbReference>
<dbReference type="InterPro" id="IPR002677">
    <property type="entry name" value="Ribosomal_bL32"/>
</dbReference>
<dbReference type="InterPro" id="IPR044957">
    <property type="entry name" value="Ribosomal_bL32_bact"/>
</dbReference>
<dbReference type="InterPro" id="IPR011332">
    <property type="entry name" value="Ribosomal_zn-bd"/>
</dbReference>
<dbReference type="NCBIfam" id="TIGR01031">
    <property type="entry name" value="rpmF_bact"/>
    <property type="match status" value="1"/>
</dbReference>
<dbReference type="PANTHER" id="PTHR35534">
    <property type="entry name" value="50S RIBOSOMAL PROTEIN L32"/>
    <property type="match status" value="1"/>
</dbReference>
<dbReference type="PANTHER" id="PTHR35534:SF1">
    <property type="entry name" value="LARGE RIBOSOMAL SUBUNIT PROTEIN BL32"/>
    <property type="match status" value="1"/>
</dbReference>
<dbReference type="Pfam" id="PF01783">
    <property type="entry name" value="Ribosomal_L32p"/>
    <property type="match status" value="1"/>
</dbReference>
<dbReference type="SUPFAM" id="SSF57829">
    <property type="entry name" value="Zn-binding ribosomal proteins"/>
    <property type="match status" value="1"/>
</dbReference>
<protein>
    <recommendedName>
        <fullName evidence="1">Large ribosomal subunit protein bL32</fullName>
    </recommendedName>
    <alternativeName>
        <fullName evidence="2">50S ribosomal protein L32</fullName>
    </alternativeName>
</protein>
<sequence>MAVQQNKKSRSRKGMRRSHDRVAIPAVIYCSCGEPTVPHCVCPSCGTYKGRQVVAKSDNE</sequence>
<keyword id="KW-0687">Ribonucleoprotein</keyword>
<keyword id="KW-0689">Ribosomal protein</keyword>
<evidence type="ECO:0000255" key="1">
    <source>
        <dbReference type="HAMAP-Rule" id="MF_00340"/>
    </source>
</evidence>
<evidence type="ECO:0000305" key="2"/>
<proteinExistence type="inferred from homology"/>
<feature type="chain" id="PRO_1000195972" description="Large ribosomal subunit protein bL32">
    <location>
        <begin position="1"/>
        <end position="60"/>
    </location>
</feature>
<reference key="1">
    <citation type="submission" date="2009-01" db="EMBL/GenBank/DDBJ databases">
        <title>Complete sequence of Desulfovibrio desulfuricans subsp. desulfuricans str. ATCC 27774.</title>
        <authorList>
            <consortium name="US DOE Joint Genome Institute"/>
            <person name="Lucas S."/>
            <person name="Copeland A."/>
            <person name="Lapidus A."/>
            <person name="Glavina del Rio T."/>
            <person name="Tice H."/>
            <person name="Bruce D."/>
            <person name="Goodwin L."/>
            <person name="Pitluck S."/>
            <person name="Sims D."/>
            <person name="Lu M."/>
            <person name="Kiss H."/>
            <person name="Meineke L."/>
            <person name="Brettin T."/>
            <person name="Detter J.C."/>
            <person name="Han C."/>
            <person name="Larimer F."/>
            <person name="Land M."/>
            <person name="Hauser L."/>
            <person name="Kyrpides N."/>
            <person name="Ovchinnikova G."/>
            <person name="Hazen T.C."/>
        </authorList>
    </citation>
    <scope>NUCLEOTIDE SEQUENCE [LARGE SCALE GENOMIC DNA]</scope>
    <source>
        <strain>ATCC 27774 / DSM 6949 / MB</strain>
    </source>
</reference>